<name>RIMP_DELAS</name>
<dbReference type="EMBL" id="CP000884">
    <property type="protein sequence ID" value="ABX35626.1"/>
    <property type="molecule type" value="Genomic_DNA"/>
</dbReference>
<dbReference type="RefSeq" id="WP_012204832.1">
    <property type="nucleotide sequence ID" value="NC_010002.1"/>
</dbReference>
<dbReference type="SMR" id="A9C1Z0"/>
<dbReference type="STRING" id="398578.Daci_2988"/>
<dbReference type="GeneID" id="24119154"/>
<dbReference type="KEGG" id="dac:Daci_2988"/>
<dbReference type="eggNOG" id="COG0779">
    <property type="taxonomic scope" value="Bacteria"/>
</dbReference>
<dbReference type="HOGENOM" id="CLU_070525_1_0_4"/>
<dbReference type="Proteomes" id="UP000000784">
    <property type="component" value="Chromosome"/>
</dbReference>
<dbReference type="GO" id="GO:0005829">
    <property type="term" value="C:cytosol"/>
    <property type="evidence" value="ECO:0007669"/>
    <property type="project" value="TreeGrafter"/>
</dbReference>
<dbReference type="GO" id="GO:0000028">
    <property type="term" value="P:ribosomal small subunit assembly"/>
    <property type="evidence" value="ECO:0007669"/>
    <property type="project" value="TreeGrafter"/>
</dbReference>
<dbReference type="GO" id="GO:0006412">
    <property type="term" value="P:translation"/>
    <property type="evidence" value="ECO:0007669"/>
    <property type="project" value="TreeGrafter"/>
</dbReference>
<dbReference type="CDD" id="cd01734">
    <property type="entry name" value="YlxS_C"/>
    <property type="match status" value="1"/>
</dbReference>
<dbReference type="Gene3D" id="3.30.300.70">
    <property type="entry name" value="RimP-like superfamily, N-terminal"/>
    <property type="match status" value="1"/>
</dbReference>
<dbReference type="HAMAP" id="MF_01077">
    <property type="entry name" value="RimP"/>
    <property type="match status" value="1"/>
</dbReference>
<dbReference type="InterPro" id="IPR003728">
    <property type="entry name" value="Ribosome_maturation_RimP"/>
</dbReference>
<dbReference type="InterPro" id="IPR028998">
    <property type="entry name" value="RimP_C"/>
</dbReference>
<dbReference type="InterPro" id="IPR036847">
    <property type="entry name" value="RimP_C_sf"/>
</dbReference>
<dbReference type="InterPro" id="IPR028989">
    <property type="entry name" value="RimP_N"/>
</dbReference>
<dbReference type="InterPro" id="IPR035956">
    <property type="entry name" value="RimP_N_sf"/>
</dbReference>
<dbReference type="NCBIfam" id="NF000929">
    <property type="entry name" value="PRK00092.2-1"/>
    <property type="match status" value="1"/>
</dbReference>
<dbReference type="NCBIfam" id="NF011235">
    <property type="entry name" value="PRK14642.1"/>
    <property type="match status" value="1"/>
</dbReference>
<dbReference type="PANTHER" id="PTHR33867">
    <property type="entry name" value="RIBOSOME MATURATION FACTOR RIMP"/>
    <property type="match status" value="1"/>
</dbReference>
<dbReference type="PANTHER" id="PTHR33867:SF1">
    <property type="entry name" value="RIBOSOME MATURATION FACTOR RIMP"/>
    <property type="match status" value="1"/>
</dbReference>
<dbReference type="Pfam" id="PF02576">
    <property type="entry name" value="RimP_N"/>
    <property type="match status" value="1"/>
</dbReference>
<dbReference type="SUPFAM" id="SSF74942">
    <property type="entry name" value="YhbC-like, C-terminal domain"/>
    <property type="match status" value="1"/>
</dbReference>
<dbReference type="SUPFAM" id="SSF75420">
    <property type="entry name" value="YhbC-like, N-terminal domain"/>
    <property type="match status" value="1"/>
</dbReference>
<accession>A9C1Z0</accession>
<gene>
    <name evidence="1" type="primary">rimP</name>
    <name type="ordered locus">Daci_2988</name>
</gene>
<sequence length="192" mass="21224">MALQQIVEQTVTGLGYDLVEIERSAGGLLRVTIDLPWQPPVEGGPVVPEQFVTVEDCEKITRQLQFALEVDGADYTRLEVSSPGIDRPLRHEQDFTRFVGEVIDLTLKEPIGAAAEGQVSANRKKFRGTLERAEDGGWQIVWSDEPPVKPGQKVSKKRVPAPLQALGFTLEELREARLAPIVDFKGRSAKPV</sequence>
<reference key="1">
    <citation type="submission" date="2007-11" db="EMBL/GenBank/DDBJ databases">
        <title>Complete sequence of Delftia acidovorans DSM 14801 / SPH-1.</title>
        <authorList>
            <person name="Copeland A."/>
            <person name="Lucas S."/>
            <person name="Lapidus A."/>
            <person name="Barry K."/>
            <person name="Glavina del Rio T."/>
            <person name="Dalin E."/>
            <person name="Tice H."/>
            <person name="Pitluck S."/>
            <person name="Lowry S."/>
            <person name="Clum A."/>
            <person name="Schmutz J."/>
            <person name="Larimer F."/>
            <person name="Land M."/>
            <person name="Hauser L."/>
            <person name="Kyrpides N."/>
            <person name="Kim E."/>
            <person name="Schleheck D."/>
            <person name="Richardson P."/>
        </authorList>
    </citation>
    <scope>NUCLEOTIDE SEQUENCE [LARGE SCALE GENOMIC DNA]</scope>
    <source>
        <strain>DSM 14801 / SPH-1</strain>
    </source>
</reference>
<evidence type="ECO:0000255" key="1">
    <source>
        <dbReference type="HAMAP-Rule" id="MF_01077"/>
    </source>
</evidence>
<keyword id="KW-0963">Cytoplasm</keyword>
<keyword id="KW-1185">Reference proteome</keyword>
<keyword id="KW-0690">Ribosome biogenesis</keyword>
<organism>
    <name type="scientific">Delftia acidovorans (strain DSM 14801 / SPH-1)</name>
    <dbReference type="NCBI Taxonomy" id="398578"/>
    <lineage>
        <taxon>Bacteria</taxon>
        <taxon>Pseudomonadati</taxon>
        <taxon>Pseudomonadota</taxon>
        <taxon>Betaproteobacteria</taxon>
        <taxon>Burkholderiales</taxon>
        <taxon>Comamonadaceae</taxon>
        <taxon>Delftia</taxon>
    </lineage>
</organism>
<protein>
    <recommendedName>
        <fullName evidence="1">Ribosome maturation factor RimP</fullName>
    </recommendedName>
</protein>
<feature type="chain" id="PRO_1000136757" description="Ribosome maturation factor RimP">
    <location>
        <begin position="1"/>
        <end position="192"/>
    </location>
</feature>
<proteinExistence type="inferred from homology"/>
<comment type="function">
    <text evidence="1">Required for maturation of 30S ribosomal subunits.</text>
</comment>
<comment type="subcellular location">
    <subcellularLocation>
        <location evidence="1">Cytoplasm</location>
    </subcellularLocation>
</comment>
<comment type="similarity">
    <text evidence="1">Belongs to the RimP family.</text>
</comment>